<accession>A2VD12</accession>
<keyword id="KW-0175">Coiled coil</keyword>
<keyword id="KW-0963">Cytoplasm</keyword>
<keyword id="KW-0206">Cytoskeleton</keyword>
<keyword id="KW-0493">Microtubule</keyword>
<keyword id="KW-0539">Nucleus</keyword>
<keyword id="KW-0597">Phosphoprotein</keyword>
<keyword id="KW-1185">Reference proteome</keyword>
<comment type="function">
    <text evidence="1">Regulator of pre-B-cell leukemia transcription factors (BPXs) function. Inhibits the binding of PBX1-HOX complex to DNA and blocks the transcriptional activity of E2A-PBX1. Tethers estrogen receptor-alpha (ESR1) to microtubules and allows them to influence estrogen receptors-alpha signaling (By similarity).</text>
</comment>
<comment type="subunit">
    <text evidence="1">Interacts with ESR1, PBX1, PBX2 and PBX3. Interacts with TEX11 (By similarity).</text>
</comment>
<comment type="subcellular location">
    <subcellularLocation>
        <location evidence="3">Cytoplasm</location>
        <location evidence="3">Cytoskeleton</location>
    </subcellularLocation>
    <subcellularLocation>
        <location evidence="3">Nucleus</location>
    </subcellularLocation>
    <text evidence="3">Shuttles between the nucleus and the cytosol. Mainly localized in the cytoplasm, associated with microtubules. Detected in small amounts in the nucleus.</text>
</comment>
<comment type="domain">
    <text evidence="1">The C-terminal domain (AA 443-731) contains a nuclear export signal.</text>
</comment>
<comment type="domain">
    <text evidence="1">Association to the cytoskeleton through a N-terminal leucine rich-domain (between AA 190-218).</text>
</comment>
<proteinExistence type="evidence at protein level"/>
<name>PBIP1_RAT</name>
<evidence type="ECO:0000250" key="1"/>
<evidence type="ECO:0000250" key="2">
    <source>
        <dbReference type="UniProtKB" id="Q3TVI8"/>
    </source>
</evidence>
<evidence type="ECO:0000250" key="3">
    <source>
        <dbReference type="UniProtKB" id="Q96AQ6"/>
    </source>
</evidence>
<evidence type="ECO:0000255" key="4"/>
<evidence type="ECO:0000256" key="5">
    <source>
        <dbReference type="SAM" id="MobiDB-lite"/>
    </source>
</evidence>
<evidence type="ECO:0007744" key="6">
    <source>
    </source>
</evidence>
<gene>
    <name type="primary">Pbxip1</name>
    <name type="synonym">Hpip</name>
</gene>
<dbReference type="EMBL" id="BC129100">
    <property type="protein sequence ID" value="AAI29101.1"/>
    <property type="molecule type" value="mRNA"/>
</dbReference>
<dbReference type="RefSeq" id="NP_001094446.1">
    <property type="nucleotide sequence ID" value="NM_001100976.1"/>
</dbReference>
<dbReference type="RefSeq" id="XP_006232731.1">
    <property type="nucleotide sequence ID" value="XM_006232669.4"/>
</dbReference>
<dbReference type="RefSeq" id="XP_063137935.1">
    <property type="nucleotide sequence ID" value="XM_063281865.1"/>
</dbReference>
<dbReference type="RefSeq" id="XP_063137936.1">
    <property type="nucleotide sequence ID" value="XM_063281866.1"/>
</dbReference>
<dbReference type="SMR" id="A2VD12"/>
<dbReference type="BioGRID" id="259689">
    <property type="interactions" value="1"/>
</dbReference>
<dbReference type="FunCoup" id="A2VD12">
    <property type="interactions" value="414"/>
</dbReference>
<dbReference type="STRING" id="10116.ENSRNOP00000028058"/>
<dbReference type="GlyCosmos" id="A2VD12">
    <property type="glycosylation" value="1 site, 3 glycans"/>
</dbReference>
<dbReference type="GlyGen" id="A2VD12">
    <property type="glycosylation" value="2 sites, 3 N-linked glycans (1 site)"/>
</dbReference>
<dbReference type="iPTMnet" id="A2VD12"/>
<dbReference type="PhosphoSitePlus" id="A2VD12"/>
<dbReference type="SwissPalm" id="A2VD12"/>
<dbReference type="PaxDb" id="10116-ENSRNOP00000028058"/>
<dbReference type="PeptideAtlas" id="A2VD12"/>
<dbReference type="Ensembl" id="ENSRNOT00000028057.5">
    <property type="protein sequence ID" value="ENSRNOP00000028058.3"/>
    <property type="gene ID" value="ENSRNOG00000020673.5"/>
</dbReference>
<dbReference type="GeneID" id="310644"/>
<dbReference type="KEGG" id="rno:310644"/>
<dbReference type="UCSC" id="RGD:1305180">
    <property type="organism name" value="rat"/>
</dbReference>
<dbReference type="AGR" id="RGD:1305180"/>
<dbReference type="CTD" id="57326"/>
<dbReference type="RGD" id="1305180">
    <property type="gene designation" value="Pbxip1"/>
</dbReference>
<dbReference type="eggNOG" id="ENOG502QRIW">
    <property type="taxonomic scope" value="Eukaryota"/>
</dbReference>
<dbReference type="GeneTree" id="ENSGT00940000162147"/>
<dbReference type="HOGENOM" id="CLU_024505_0_0_1"/>
<dbReference type="InParanoid" id="A2VD12"/>
<dbReference type="PhylomeDB" id="A2VD12"/>
<dbReference type="TreeFam" id="TF333202"/>
<dbReference type="PRO" id="PR:A2VD12"/>
<dbReference type="Proteomes" id="UP000002494">
    <property type="component" value="Chromosome 2"/>
</dbReference>
<dbReference type="Bgee" id="ENSRNOG00000020673">
    <property type="expression patterns" value="Expressed in skeletal muscle tissue and 19 other cell types or tissues"/>
</dbReference>
<dbReference type="GO" id="GO:0000785">
    <property type="term" value="C:chromatin"/>
    <property type="evidence" value="ECO:0000266"/>
    <property type="project" value="RGD"/>
</dbReference>
<dbReference type="GO" id="GO:0005737">
    <property type="term" value="C:cytoplasm"/>
    <property type="evidence" value="ECO:0000266"/>
    <property type="project" value="RGD"/>
</dbReference>
<dbReference type="GO" id="GO:0005829">
    <property type="term" value="C:cytosol"/>
    <property type="evidence" value="ECO:0000266"/>
    <property type="project" value="RGD"/>
</dbReference>
<dbReference type="GO" id="GO:0005874">
    <property type="term" value="C:microtubule"/>
    <property type="evidence" value="ECO:0007669"/>
    <property type="project" value="UniProtKB-KW"/>
</dbReference>
<dbReference type="GO" id="GO:0005634">
    <property type="term" value="C:nucleus"/>
    <property type="evidence" value="ECO:0000266"/>
    <property type="project" value="RGD"/>
</dbReference>
<dbReference type="GO" id="GO:0005667">
    <property type="term" value="C:transcription regulator complex"/>
    <property type="evidence" value="ECO:0000266"/>
    <property type="project" value="RGD"/>
</dbReference>
<dbReference type="GO" id="GO:0140297">
    <property type="term" value="F:DNA-binding transcription factor binding"/>
    <property type="evidence" value="ECO:0000266"/>
    <property type="project" value="RGD"/>
</dbReference>
<dbReference type="GO" id="GO:0003713">
    <property type="term" value="F:transcription coactivator activity"/>
    <property type="evidence" value="ECO:0000266"/>
    <property type="project" value="RGD"/>
</dbReference>
<dbReference type="GO" id="GO:0003712">
    <property type="term" value="F:transcription coregulator activity"/>
    <property type="evidence" value="ECO:0000318"/>
    <property type="project" value="GO_Central"/>
</dbReference>
<dbReference type="GO" id="GO:0003714">
    <property type="term" value="F:transcription corepressor activity"/>
    <property type="evidence" value="ECO:0000266"/>
    <property type="project" value="RGD"/>
</dbReference>
<dbReference type="GO" id="GO:0061975">
    <property type="term" value="P:articular cartilage development"/>
    <property type="evidence" value="ECO:0000266"/>
    <property type="project" value="RGD"/>
</dbReference>
<dbReference type="GO" id="GO:0007155">
    <property type="term" value="P:cell adhesion"/>
    <property type="evidence" value="ECO:0000266"/>
    <property type="project" value="RGD"/>
</dbReference>
<dbReference type="GO" id="GO:0016477">
    <property type="term" value="P:cell migration"/>
    <property type="evidence" value="ECO:0000266"/>
    <property type="project" value="RGD"/>
</dbReference>
<dbReference type="GO" id="GO:0022617">
    <property type="term" value="P:extracellular matrix disassembly"/>
    <property type="evidence" value="ECO:0000266"/>
    <property type="project" value="RGD"/>
</dbReference>
<dbReference type="GO" id="GO:0010467">
    <property type="term" value="P:gene expression"/>
    <property type="evidence" value="ECO:0000266"/>
    <property type="project" value="RGD"/>
</dbReference>
<dbReference type="GO" id="GO:1901148">
    <property type="term" value="P:gene expression involved in extracellular matrix organization"/>
    <property type="evidence" value="ECO:0000266"/>
    <property type="project" value="RGD"/>
</dbReference>
<dbReference type="GO" id="GO:0030097">
    <property type="term" value="P:hemopoiesis"/>
    <property type="evidence" value="ECO:0000266"/>
    <property type="project" value="RGD"/>
</dbReference>
<dbReference type="GO" id="GO:0045892">
    <property type="term" value="P:negative regulation of DNA-templated transcription"/>
    <property type="evidence" value="ECO:0000266"/>
    <property type="project" value="RGD"/>
</dbReference>
<dbReference type="GO" id="GO:1902732">
    <property type="term" value="P:positive regulation of chondrocyte proliferation"/>
    <property type="evidence" value="ECO:0000266"/>
    <property type="project" value="RGD"/>
</dbReference>
<dbReference type="GO" id="GO:0045893">
    <property type="term" value="P:positive regulation of DNA-templated transcription"/>
    <property type="evidence" value="ECO:0000266"/>
    <property type="project" value="RGD"/>
</dbReference>
<dbReference type="GO" id="GO:0030177">
    <property type="term" value="P:positive regulation of Wnt signaling pathway"/>
    <property type="evidence" value="ECO:0000266"/>
    <property type="project" value="RGD"/>
</dbReference>
<dbReference type="GO" id="GO:0002532">
    <property type="term" value="P:production of molecular mediator involved in inflammatory response"/>
    <property type="evidence" value="ECO:0000266"/>
    <property type="project" value="RGD"/>
</dbReference>
<dbReference type="GO" id="GO:0006355">
    <property type="term" value="P:regulation of DNA-templated transcription"/>
    <property type="evidence" value="ECO:0000318"/>
    <property type="project" value="GO_Central"/>
</dbReference>
<dbReference type="InterPro" id="IPR051990">
    <property type="entry name" value="CCPG1/PBIP1"/>
</dbReference>
<dbReference type="PANTHER" id="PTHR28638">
    <property type="entry name" value="CELL CYCLE PROGRESSION PROTEIN 1"/>
    <property type="match status" value="1"/>
</dbReference>
<dbReference type="PANTHER" id="PTHR28638:SF1">
    <property type="entry name" value="PRE-B-CELL LEUKEMIA TRANSCRIPTION FACTOR-INTERACTING PROTEIN 1"/>
    <property type="match status" value="1"/>
</dbReference>
<feature type="chain" id="PRO_0000306117" description="Pre-B-cell leukemia transcription factor-interacting protein 1">
    <location>
        <begin position="1"/>
        <end position="722"/>
    </location>
</feature>
<feature type="region of interest" description="Disordered" evidence="5">
    <location>
        <begin position="1"/>
        <end position="180"/>
    </location>
</feature>
<feature type="region of interest" description="Disordered" evidence="5">
    <location>
        <begin position="442"/>
        <end position="562"/>
    </location>
</feature>
<feature type="region of interest" description="Disordered" evidence="5">
    <location>
        <begin position="691"/>
        <end position="722"/>
    </location>
</feature>
<feature type="coiled-coil region" evidence="4">
    <location>
        <begin position="266"/>
        <end position="346"/>
    </location>
</feature>
<feature type="coiled-coil region" evidence="4">
    <location>
        <begin position="373"/>
        <end position="401"/>
    </location>
</feature>
<feature type="short sequence motif" description="Nuclear localization signal" evidence="1">
    <location>
        <begin position="482"/>
        <end position="502"/>
    </location>
</feature>
<feature type="short sequence motif" description="Nuclear localization signal" evidence="1">
    <location>
        <begin position="686"/>
        <end position="711"/>
    </location>
</feature>
<feature type="compositionally biased region" description="Polar residues" evidence="5">
    <location>
        <begin position="1"/>
        <end position="10"/>
    </location>
</feature>
<feature type="compositionally biased region" description="Basic and acidic residues" evidence="5">
    <location>
        <begin position="88"/>
        <end position="97"/>
    </location>
</feature>
<feature type="compositionally biased region" description="Polar residues" evidence="5">
    <location>
        <begin position="442"/>
        <end position="453"/>
    </location>
</feature>
<feature type="compositionally biased region" description="Basic and acidic residues" evidence="5">
    <location>
        <begin position="465"/>
        <end position="536"/>
    </location>
</feature>
<feature type="compositionally biased region" description="Basic and acidic residues" evidence="5">
    <location>
        <begin position="546"/>
        <end position="559"/>
    </location>
</feature>
<feature type="modified residue" description="Phosphoserine" evidence="6">
    <location>
        <position position="133"/>
    </location>
</feature>
<feature type="modified residue" description="Phosphoserine" evidence="3">
    <location>
        <position position="144"/>
    </location>
</feature>
<feature type="modified residue" description="Phosphoserine" evidence="3">
    <location>
        <position position="145"/>
    </location>
</feature>
<feature type="modified residue" description="Phosphoserine" evidence="3">
    <location>
        <position position="146"/>
    </location>
</feature>
<feature type="modified residue" description="Phosphothreonine" evidence="3">
    <location>
        <position position="150"/>
    </location>
</feature>
<feature type="modified residue" description="Phosphoserine" evidence="2">
    <location>
        <position position="166"/>
    </location>
</feature>
<feature type="modified residue" description="Phosphoserine" evidence="6">
    <location>
        <position position="559"/>
    </location>
</feature>
<organism>
    <name type="scientific">Rattus norvegicus</name>
    <name type="common">Rat</name>
    <dbReference type="NCBI Taxonomy" id="10116"/>
    <lineage>
        <taxon>Eukaryota</taxon>
        <taxon>Metazoa</taxon>
        <taxon>Chordata</taxon>
        <taxon>Craniata</taxon>
        <taxon>Vertebrata</taxon>
        <taxon>Euteleostomi</taxon>
        <taxon>Mammalia</taxon>
        <taxon>Eutheria</taxon>
        <taxon>Euarchontoglires</taxon>
        <taxon>Glires</taxon>
        <taxon>Rodentia</taxon>
        <taxon>Myomorpha</taxon>
        <taxon>Muroidea</taxon>
        <taxon>Muridae</taxon>
        <taxon>Murinae</taxon>
        <taxon>Rattus</taxon>
    </lineage>
</organism>
<reference key="1">
    <citation type="journal article" date="2004" name="Genome Res.">
        <title>The status, quality, and expansion of the NIH full-length cDNA project: the Mammalian Gene Collection (MGC).</title>
        <authorList>
            <consortium name="The MGC Project Team"/>
        </authorList>
    </citation>
    <scope>NUCLEOTIDE SEQUENCE [LARGE SCALE MRNA]</scope>
    <source>
        <tissue>Lung</tissue>
    </source>
</reference>
<reference key="2">
    <citation type="journal article" date="2012" name="Nat. Commun.">
        <title>Quantitative maps of protein phosphorylation sites across 14 different rat organs and tissues.</title>
        <authorList>
            <person name="Lundby A."/>
            <person name="Secher A."/>
            <person name="Lage K."/>
            <person name="Nordsborg N.B."/>
            <person name="Dmytriyev A."/>
            <person name="Lundby C."/>
            <person name="Olsen J.V."/>
        </authorList>
    </citation>
    <scope>PHOSPHORYLATION [LARGE SCALE ANALYSIS] AT SER-133 AND SER-559</scope>
    <scope>IDENTIFICATION BY MASS SPECTROMETRY [LARGE SCALE ANALYSIS]</scope>
</reference>
<sequence>MASCPDSDNSWVLAGSETLPVETLGPESRVDPESEEAPQALQDSSKADGKESAGTLNGEEMLFQTESSQGEGAALPEESEAKGALGGDDGHGTKRPGDTAVQEDLQETPMVTSLGPDTQDLERNIHPQNLPSSPRAVWKEHGCSSSDDDTDVDVEGLRRRRGREPSPPQPTAAVDGEDQAKGEGIGELGISLNMCFLGALVLLGLGILLFSGALLEPETEPVEEAELQVFPETELVQTVGNRQDEVEQLQASVPPDSVPSLQSMGLLLDKLAKENQDIRLLQAQLQAQKEELQSLLHQPKGLEEENARLREALQQGKTSHQALESELQQLRARLQGLEANCVRGVDGVCLNWGGSPQGGKATTEQGHKGQEPDTSLLEQHKQLEAEAKALRQELQKQWQLLGSVHRNLQRGLQDAGQGAPAHAGLAELGHMLAQTLQGLESQGINTGRSSNDSEAWHQKKPRFQHPREWSGREKWRGGQRDQKAEHWKLKKEESGQDRKKSWRDEGREFTGHWKENRPRAEESGSRKDSKRQDPKVHPRKSGNSHSGERQKHSWGKDNSPDSVSWEELLRRKYRPPQGCSGVADCARQEGLALFGVELAPVRQQELASVLREYLARLPWAGQLTKELPLSPAYFGEDGIFRHDRLRFRDFVDALEDSLEEVALKQTGDDDEVDDFEDFIFSHFFGDKALKRRSKKKEKQPWNHRAVGPREEHSRHPHHYHQG</sequence>
<protein>
    <recommendedName>
        <fullName>Pre-B-cell leukemia transcription factor-interacting protein 1</fullName>
    </recommendedName>
    <alternativeName>
        <fullName>Hematopoietic PBX-interacting protein</fullName>
    </alternativeName>
</protein>